<protein>
    <recommendedName>
        <fullName>Plasminogen-binding protein PgbA</fullName>
    </recommendedName>
</protein>
<evidence type="ECO:0000250" key="1"/>
<evidence type="ECO:0000256" key="2">
    <source>
        <dbReference type="SAM" id="MobiDB-lite"/>
    </source>
</evidence>
<evidence type="ECO:0000305" key="3"/>
<accession>Q9ZLW8</accession>
<gene>
    <name type="primary">pgbA</name>
    <name type="ordered locus">jhp_0458</name>
</gene>
<proteinExistence type="inferred from homology"/>
<reference key="1">
    <citation type="journal article" date="1999" name="Nature">
        <title>Genomic sequence comparison of two unrelated isolates of the human gastric pathogen Helicobacter pylori.</title>
        <authorList>
            <person name="Alm R.A."/>
            <person name="Ling L.-S.L."/>
            <person name="Moir D.T."/>
            <person name="King B.L."/>
            <person name="Brown E.D."/>
            <person name="Doig P.C."/>
            <person name="Smith D.R."/>
            <person name="Noonan B."/>
            <person name="Guild B.C."/>
            <person name="deJonge B.L."/>
            <person name="Carmel G."/>
            <person name="Tummino P.J."/>
            <person name="Caruso A."/>
            <person name="Uria-Nickelsen M."/>
            <person name="Mills D.M."/>
            <person name="Ives C."/>
            <person name="Gibson R."/>
            <person name="Merberg D."/>
            <person name="Mills S.D."/>
            <person name="Jiang Q."/>
            <person name="Taylor D.E."/>
            <person name="Vovis G.F."/>
            <person name="Trust T.J."/>
        </authorList>
    </citation>
    <scope>NUCLEOTIDE SEQUENCE [LARGE SCALE GENOMIC DNA]</scope>
    <source>
        <strain>J99 / ATCC 700824</strain>
    </source>
</reference>
<feature type="chain" id="PRO_0000058350" description="Plasminogen-binding protein PgbA">
    <location>
        <begin position="1"/>
        <end position="450"/>
    </location>
</feature>
<feature type="region of interest" description="Disordered" evidence="2">
    <location>
        <begin position="262"/>
        <end position="450"/>
    </location>
</feature>
<feature type="compositionally biased region" description="Basic and acidic residues" evidence="2">
    <location>
        <begin position="262"/>
        <end position="273"/>
    </location>
</feature>
<feature type="compositionally biased region" description="Basic and acidic residues" evidence="2">
    <location>
        <begin position="284"/>
        <end position="310"/>
    </location>
</feature>
<feature type="compositionally biased region" description="Basic and acidic residues" evidence="2">
    <location>
        <begin position="317"/>
        <end position="362"/>
    </location>
</feature>
<feature type="compositionally biased region" description="Polar residues" evidence="2">
    <location>
        <begin position="363"/>
        <end position="386"/>
    </location>
</feature>
<feature type="compositionally biased region" description="Basic and acidic residues" evidence="2">
    <location>
        <begin position="389"/>
        <end position="450"/>
    </location>
</feature>
<comment type="function">
    <text evidence="1">Binds plasminogen, specifically, and in a concentration and lysine-dependent manner. Plasminogen is the precursor of plasmin, a serine protease that cleaves fibrin, fibronectin, laminin and vitronectin. Acquisition of plasminogen/plasmin could enable H.pylori to degrade host components (By similarity).</text>
</comment>
<comment type="subcellular location">
    <subcellularLocation>
        <location evidence="3">Cell surface</location>
    </subcellularLocation>
    <text evidence="3">The plasminogen-binding region is localized on the surface the bacterium.</text>
</comment>
<comment type="miscellaneous">
    <text evidence="1">Plasminogen bound to PgbA is capable of being converted to functionally active plasmin.</text>
</comment>
<dbReference type="EMBL" id="AE001439">
    <property type="protein sequence ID" value="AAD06039.1"/>
    <property type="molecule type" value="Genomic_DNA"/>
</dbReference>
<dbReference type="PIR" id="G71928">
    <property type="entry name" value="G71928"/>
</dbReference>
<dbReference type="RefSeq" id="WP_000945055.1">
    <property type="nucleotide sequence ID" value="NC_000921.1"/>
</dbReference>
<dbReference type="SMR" id="Q9ZLW8"/>
<dbReference type="KEGG" id="hpj:jhp_0458"/>
<dbReference type="PATRIC" id="fig|85963.30.peg.546"/>
<dbReference type="Proteomes" id="UP000000804">
    <property type="component" value="Chromosome"/>
</dbReference>
<dbReference type="GO" id="GO:0009986">
    <property type="term" value="C:cell surface"/>
    <property type="evidence" value="ECO:0007669"/>
    <property type="project" value="UniProtKB-SubCell"/>
</dbReference>
<dbReference type="InterPro" id="IPR032737">
    <property type="entry name" value="PGBA_C"/>
</dbReference>
<dbReference type="InterPro" id="IPR029276">
    <property type="entry name" value="PgbA_N"/>
</dbReference>
<dbReference type="Pfam" id="PF15437">
    <property type="entry name" value="PGBA_C"/>
    <property type="match status" value="2"/>
</dbReference>
<dbReference type="Pfam" id="PF15436">
    <property type="entry name" value="PGBA_N"/>
    <property type="match status" value="1"/>
</dbReference>
<organism>
    <name type="scientific">Helicobacter pylori (strain J99 / ATCC 700824)</name>
    <name type="common">Campylobacter pylori J99</name>
    <dbReference type="NCBI Taxonomy" id="85963"/>
    <lineage>
        <taxon>Bacteria</taxon>
        <taxon>Pseudomonadati</taxon>
        <taxon>Campylobacterota</taxon>
        <taxon>Epsilonproteobacteria</taxon>
        <taxon>Campylobacterales</taxon>
        <taxon>Helicobacteraceae</taxon>
        <taxon>Helicobacter</taxon>
    </lineage>
</organism>
<name>PGBA_HELPJ</name>
<sequence>MLRLLIGLLLMSFISLQSASWQEPLRVSIEFVDLPKKIIRFPAHDLKVGEFGFVVTKLSDYEIVNSEVVIIAVENGVATAKFKAFESMKQSHLPTPRMVAKKGDLVYFRQFNNQAFLIAPNDELYEQIRATNTDINFISSDLLVTFLNGFDPKIANLRKACNVYSVGVIYIVTTNTLNILSCESFEILEKRELDTSGVTKTSTPFFSRVEGIDAGTLGKLFSGSQSKNYFAYYDALVKKEKRKEVRIEKKEERIDARENKREIKQEAIKEPKKANQGTENAPTLEEKNYQKAERKFDAKEERRRSRDERKKTKATKKAMEFEEREKEHDERDEKETEERRKALEMDKGNEKVNAKENEREINQESANEPSSENNATLKDTENTSVLKESAAKKEAPKPSSKEEKRRLKEEKKKAKAEQRAREFEQRAREHQERDEKELEERRKALEMNKK</sequence>